<dbReference type="EMBL" id="AF178433">
    <property type="protein sequence ID" value="AAD55951.1"/>
    <property type="molecule type" value="Genomic_DNA"/>
</dbReference>
<dbReference type="EMBL" id="AACS02000006">
    <property type="protein sequence ID" value="EAU83914.2"/>
    <property type="status" value="ALT_SEQ"/>
    <property type="molecule type" value="Genomic_DNA"/>
</dbReference>
<dbReference type="RefSeq" id="XP_001837898.2">
    <property type="nucleotide sequence ID" value="XM_001837846.2"/>
</dbReference>
<dbReference type="SMR" id="Q9UVN9"/>
<dbReference type="FunCoup" id="Q9UVN9">
    <property type="interactions" value="644"/>
</dbReference>
<dbReference type="STRING" id="240176.Q9UVN9"/>
<dbReference type="GeneID" id="6014460"/>
<dbReference type="KEGG" id="cci:CC1G_10319"/>
<dbReference type="eggNOG" id="KOG2310">
    <property type="taxonomic scope" value="Eukaryota"/>
</dbReference>
<dbReference type="HOGENOM" id="CLU_009535_3_1_1"/>
<dbReference type="InParanoid" id="Q9UVN9"/>
<dbReference type="OrthoDB" id="30417at2759"/>
<dbReference type="Proteomes" id="UP000001861">
    <property type="component" value="Unassembled WGS sequence"/>
</dbReference>
<dbReference type="GO" id="GO:0000781">
    <property type="term" value="C:chromosome, telomeric region"/>
    <property type="evidence" value="ECO:0007669"/>
    <property type="project" value="UniProtKB-SubCell"/>
</dbReference>
<dbReference type="GO" id="GO:0030870">
    <property type="term" value="C:Mre11 complex"/>
    <property type="evidence" value="ECO:0007669"/>
    <property type="project" value="InterPro"/>
</dbReference>
<dbReference type="GO" id="GO:0035861">
    <property type="term" value="C:site of double-strand break"/>
    <property type="evidence" value="ECO:0007669"/>
    <property type="project" value="TreeGrafter"/>
</dbReference>
<dbReference type="GO" id="GO:0008296">
    <property type="term" value="F:3'-5'-DNA exonuclease activity"/>
    <property type="evidence" value="ECO:0007669"/>
    <property type="project" value="InterPro"/>
</dbReference>
<dbReference type="GO" id="GO:0030145">
    <property type="term" value="F:manganese ion binding"/>
    <property type="evidence" value="ECO:0007669"/>
    <property type="project" value="InterPro"/>
</dbReference>
<dbReference type="GO" id="GO:0000014">
    <property type="term" value="F:single-stranded DNA endodeoxyribonuclease activity"/>
    <property type="evidence" value="ECO:0007669"/>
    <property type="project" value="TreeGrafter"/>
</dbReference>
<dbReference type="GO" id="GO:0000724">
    <property type="term" value="P:double-strand break repair via homologous recombination"/>
    <property type="evidence" value="ECO:0007669"/>
    <property type="project" value="TreeGrafter"/>
</dbReference>
<dbReference type="GO" id="GO:0006303">
    <property type="term" value="P:double-strand break repair via nonhomologous end joining"/>
    <property type="evidence" value="ECO:0007669"/>
    <property type="project" value="TreeGrafter"/>
</dbReference>
<dbReference type="GO" id="GO:0042138">
    <property type="term" value="P:meiotic DNA double-strand break formation"/>
    <property type="evidence" value="ECO:0007669"/>
    <property type="project" value="TreeGrafter"/>
</dbReference>
<dbReference type="GO" id="GO:0097552">
    <property type="term" value="P:mitochondrial double-strand break repair via homologous recombination"/>
    <property type="evidence" value="ECO:0007669"/>
    <property type="project" value="TreeGrafter"/>
</dbReference>
<dbReference type="GO" id="GO:0007095">
    <property type="term" value="P:mitotic G2 DNA damage checkpoint signaling"/>
    <property type="evidence" value="ECO:0007669"/>
    <property type="project" value="TreeGrafter"/>
</dbReference>
<dbReference type="GO" id="GO:0031573">
    <property type="term" value="P:mitotic intra-S DNA damage checkpoint signaling"/>
    <property type="evidence" value="ECO:0007669"/>
    <property type="project" value="TreeGrafter"/>
</dbReference>
<dbReference type="GO" id="GO:0000723">
    <property type="term" value="P:telomere maintenance"/>
    <property type="evidence" value="ECO:0007669"/>
    <property type="project" value="TreeGrafter"/>
</dbReference>
<dbReference type="CDD" id="cd00840">
    <property type="entry name" value="MPP_Mre11_N"/>
    <property type="match status" value="1"/>
</dbReference>
<dbReference type="FunFam" id="3.60.21.10:FF:000011">
    <property type="entry name" value="Double-strand break repair protein"/>
    <property type="match status" value="1"/>
</dbReference>
<dbReference type="Gene3D" id="3.60.21.10">
    <property type="match status" value="1"/>
</dbReference>
<dbReference type="Gene3D" id="3.30.110.110">
    <property type="entry name" value="Mre11, capping domain"/>
    <property type="match status" value="1"/>
</dbReference>
<dbReference type="InterPro" id="IPR004843">
    <property type="entry name" value="Calcineurin-like_PHP_ApaH"/>
</dbReference>
<dbReference type="InterPro" id="IPR029052">
    <property type="entry name" value="Metallo-depent_PP-like"/>
</dbReference>
<dbReference type="InterPro" id="IPR003701">
    <property type="entry name" value="Mre11"/>
</dbReference>
<dbReference type="InterPro" id="IPR038487">
    <property type="entry name" value="Mre11_capping_dom"/>
</dbReference>
<dbReference type="InterPro" id="IPR007281">
    <property type="entry name" value="Mre11_DNA-bd"/>
</dbReference>
<dbReference type="InterPro" id="IPR041796">
    <property type="entry name" value="Mre11_N"/>
</dbReference>
<dbReference type="NCBIfam" id="TIGR00583">
    <property type="entry name" value="mre11"/>
    <property type="match status" value="1"/>
</dbReference>
<dbReference type="PANTHER" id="PTHR10139">
    <property type="entry name" value="DOUBLE-STRAND BREAK REPAIR PROTEIN MRE11"/>
    <property type="match status" value="1"/>
</dbReference>
<dbReference type="PANTHER" id="PTHR10139:SF1">
    <property type="entry name" value="DOUBLE-STRAND BREAK REPAIR PROTEIN MRE11"/>
    <property type="match status" value="1"/>
</dbReference>
<dbReference type="Pfam" id="PF00149">
    <property type="entry name" value="Metallophos"/>
    <property type="match status" value="1"/>
</dbReference>
<dbReference type="Pfam" id="PF04152">
    <property type="entry name" value="Mre11_DNA_bind"/>
    <property type="match status" value="1"/>
</dbReference>
<dbReference type="PIRSF" id="PIRSF000882">
    <property type="entry name" value="DSB_repair_MRE11"/>
    <property type="match status" value="1"/>
</dbReference>
<dbReference type="SMART" id="SM01347">
    <property type="entry name" value="Mre11_DNA_bind"/>
    <property type="match status" value="1"/>
</dbReference>
<dbReference type="SUPFAM" id="SSF56300">
    <property type="entry name" value="Metallo-dependent phosphatases"/>
    <property type="match status" value="1"/>
</dbReference>
<name>MRE11_COPC7</name>
<keyword id="KW-0158">Chromosome</keyword>
<keyword id="KW-0227">DNA damage</keyword>
<keyword id="KW-0234">DNA repair</keyword>
<keyword id="KW-0255">Endonuclease</keyword>
<keyword id="KW-0269">Exonuclease</keyword>
<keyword id="KW-0378">Hydrolase</keyword>
<keyword id="KW-0464">Manganese</keyword>
<keyword id="KW-0469">Meiosis</keyword>
<keyword id="KW-0479">Metal-binding</keyword>
<keyword id="KW-0540">Nuclease</keyword>
<keyword id="KW-0539">Nucleus</keyword>
<keyword id="KW-1185">Reference proteome</keyword>
<keyword id="KW-0779">Telomere</keyword>
<reference key="1">
    <citation type="journal article" date="2000" name="Genetics">
        <title>An mre11 mutant of Coprinus cinereus has defects in meiotic chromosome pairing, condensation and synapsis.</title>
        <authorList>
            <person name="Gerecke E.E."/>
            <person name="Zolan M.E."/>
        </authorList>
    </citation>
    <scope>NUCLEOTIDE SEQUENCE [GENOMIC DNA]</scope>
</reference>
<reference key="2">
    <citation type="journal article" date="2010" name="Proc. Natl. Acad. Sci. U.S.A.">
        <title>Insights into evolution of multicellular fungi from the assembled chromosomes of the mushroom Coprinopsis cinerea (Coprinus cinereus).</title>
        <authorList>
            <person name="Stajich J.E."/>
            <person name="Wilke S.K."/>
            <person name="Ahren D."/>
            <person name="Au C.H."/>
            <person name="Birren B.W."/>
            <person name="Borodovsky M."/>
            <person name="Burns C."/>
            <person name="Canbaeck B."/>
            <person name="Casselton L.A."/>
            <person name="Cheng C.K."/>
            <person name="Deng J."/>
            <person name="Dietrich F.S."/>
            <person name="Fargo D.C."/>
            <person name="Farman M.L."/>
            <person name="Gathman A.C."/>
            <person name="Goldberg J."/>
            <person name="Guigo R."/>
            <person name="Hoegger P.J."/>
            <person name="Hooker J.B."/>
            <person name="Huggins A."/>
            <person name="James T.Y."/>
            <person name="Kamada T."/>
            <person name="Kilaru S."/>
            <person name="Kodira C."/>
            <person name="Kuees U."/>
            <person name="Kupfer D."/>
            <person name="Kwan H.S."/>
            <person name="Lomsadze A."/>
            <person name="Li W."/>
            <person name="Lilly W.W."/>
            <person name="Ma L.-J."/>
            <person name="Mackey A.J."/>
            <person name="Manning G."/>
            <person name="Martin F."/>
            <person name="Muraguchi H."/>
            <person name="Natvig D.O."/>
            <person name="Palmerini H."/>
            <person name="Ramesh M.A."/>
            <person name="Rehmeyer C.J."/>
            <person name="Roe B.A."/>
            <person name="Shenoy N."/>
            <person name="Stanke M."/>
            <person name="Ter-Hovhannisyan V."/>
            <person name="Tunlid A."/>
            <person name="Velagapudi R."/>
            <person name="Vision T.J."/>
            <person name="Zeng Q."/>
            <person name="Zolan M.E."/>
            <person name="Pukkila P.J."/>
        </authorList>
    </citation>
    <scope>NUCLEOTIDE SEQUENCE [LARGE SCALE GENOMIC DNA]</scope>
    <source>
        <strain>Okayama-7 / 130 / ATCC MYA-4618 / FGSC 9003</strain>
    </source>
</reference>
<protein>
    <recommendedName>
        <fullName>Double-strand break repair protein MRE11</fullName>
    </recommendedName>
</protein>
<comment type="function">
    <text evidence="2">Core component of the MRN complex, which plays a central role in double-strand break (DSB) repair, DNA recombination, maintenance of telomere integrity and meiosis. The MRN complex is involved in the repair of DNA double-strand breaks (DSBs) via homologous recombination (HR), an error-free mechanism which primarily occurs during S and G2 phases. The complex (1) mediates the end resection of damaged DNA, which generates proper single-stranded DNA, a key initial steps in HR, and is (2) required for the recruitment of other repair factors and efficient activation of ATM and ATR upon DNA damage. Within the MRN complex, MRE11 possesses both single-strand endonuclease activity and double-strand-specific 3'-5' exonuclease activity. MRE11 first endonucleolytically cleaves the 5' strand at DNA DSB ends to prevent non-homologous end joining (NHEJ) and licence HR. It then generates a single-stranded DNA gap via 3' to 5' exonucleolytic degradation, which is required for single-strand invasion and recombination. The MRN complex is also required for the processing of R-loops.</text>
</comment>
<comment type="cofactor">
    <cofactor evidence="1">
        <name>Mn(2+)</name>
        <dbReference type="ChEBI" id="CHEBI:29035"/>
    </cofactor>
</comment>
<comment type="subunit">
    <text evidence="1">Component of the MRN complex composed of two heterodimers RAD50 and MRE11 associated with a single NBS1.</text>
</comment>
<comment type="subcellular location">
    <subcellularLocation>
        <location evidence="2">Nucleus</location>
    </subcellularLocation>
    <subcellularLocation>
        <location evidence="3">Chromosome</location>
        <location evidence="3">Telomere</location>
    </subcellularLocation>
    <subcellularLocation>
        <location evidence="3">Chromosome</location>
    </subcellularLocation>
    <text evidence="3">Localizes to discrete nuclear foci after treatment with genotoxic agents.</text>
</comment>
<comment type="similarity">
    <text evidence="6">Belongs to the MRE11/RAD32 family.</text>
</comment>
<comment type="sequence caution" evidence="6">
    <conflict type="erroneous gene model prediction">
        <sequence resource="EMBL-CDS" id="EAU83914"/>
    </conflict>
</comment>
<proteinExistence type="inferred from homology"/>
<gene>
    <name type="primary">MRE11</name>
    <name type="ORF">CC1G_10319</name>
</gene>
<evidence type="ECO:0000250" key="1">
    <source>
        <dbReference type="UniProtKB" id="G0RYR3"/>
    </source>
</evidence>
<evidence type="ECO:0000250" key="2">
    <source>
        <dbReference type="UniProtKB" id="P32829"/>
    </source>
</evidence>
<evidence type="ECO:0000250" key="3">
    <source>
        <dbReference type="UniProtKB" id="P49959"/>
    </source>
</evidence>
<evidence type="ECO:0000255" key="4">
    <source>
        <dbReference type="PIRSR" id="PIRSR000882-1"/>
    </source>
</evidence>
<evidence type="ECO:0000256" key="5">
    <source>
        <dbReference type="SAM" id="MobiDB-lite"/>
    </source>
</evidence>
<evidence type="ECO:0000305" key="6"/>
<organism>
    <name type="scientific">Coprinopsis cinerea (strain Okayama-7 / 130 / ATCC MYA-4618 / FGSC 9003)</name>
    <name type="common">Inky cap fungus</name>
    <name type="synonym">Hormographiella aspergillata</name>
    <dbReference type="NCBI Taxonomy" id="240176"/>
    <lineage>
        <taxon>Eukaryota</taxon>
        <taxon>Fungi</taxon>
        <taxon>Dikarya</taxon>
        <taxon>Basidiomycota</taxon>
        <taxon>Agaricomycotina</taxon>
        <taxon>Agaricomycetes</taxon>
        <taxon>Agaricomycetidae</taxon>
        <taxon>Agaricales</taxon>
        <taxon>Agaricineae</taxon>
        <taxon>Psathyrellaceae</taxon>
        <taxon>Coprinopsis</taxon>
    </lineage>
</organism>
<accession>Q9UVN9</accession>
<accession>A8P0I4</accession>
<sequence length="731" mass="80647">MSDYEEDTRPPPNIETADPEDTIKILLATDNHIGYLERDPIRGQDSINTFREILQLAVKNEVDFILLAGDLFHENKPSRDCLYQTLALLREYTLGDKPIQVELLSDPDEGKAAGFSFPAINYEDPNFNISIPVFSIHGNHDDPQGPGVNGALCALDVLSVSGLLNYMGKFDLPTSDADAATTGIAVRPVLLRKGSTKLGMYGVGNVKDQRMHFELRSNRVRMYMPKDKDEWFNILLVHQNRVKHGPQEYVPEGMFDDSVDLVVWGHEHDCRIIPEPVAGKNYYITQPGSSVATSLADGEAIEKHVALLEIKGKEFQLTPIPLRTVRPFVISEVVLEDAAEEEGLDVNDQMEITKYLKQKVNDLIDQAQALWEERNARSIEAGDEEIPPMLPLVRLKVDTTNVTQTSNPIRFGQEFQGRVANPRDLLVFHRSKKAGKRGAGKVDIDQPELSIDDPDLTVSEKLAKVRVKTLVREYLAAQELQLLGENGMSDAIQMFVEKDDIHAIQTHVNKSLKTMLKNIKSDEVDEDDLDDLLAKAKQRQEEEYLEATRAGESAKGKGKAKATDDDGGAASDDSMLMDIDTGGGATFNMSDDDDDDEPPPPPKRRAATSRATTTKKAPAKAPAKKATTTTARGRGKKAAPPSSDDEVIELDDDEDEISEEEVVAKPVKRTSRAAVLSQSQAPAKKAPAKKKTPARQTQTQLSFAPAGRSSRAAASKARSKMVFDDDDDDDD</sequence>
<feature type="chain" id="PRO_0000138681" description="Double-strand break repair protein MRE11">
    <location>
        <begin position="1"/>
        <end position="731"/>
    </location>
</feature>
<feature type="region of interest" description="Disordered" evidence="5">
    <location>
        <begin position="543"/>
        <end position="731"/>
    </location>
</feature>
<feature type="compositionally biased region" description="Low complexity" evidence="5">
    <location>
        <begin position="608"/>
        <end position="632"/>
    </location>
</feature>
<feature type="compositionally biased region" description="Acidic residues" evidence="5">
    <location>
        <begin position="643"/>
        <end position="661"/>
    </location>
</feature>
<feature type="active site" description="Proton donor" evidence="4">
    <location>
        <position position="140"/>
    </location>
</feature>
<feature type="binding site" evidence="1">
    <location>
        <position position="30"/>
    </location>
    <ligand>
        <name>Mn(2+)</name>
        <dbReference type="ChEBI" id="CHEBI:29035"/>
        <label>1</label>
    </ligand>
</feature>
<feature type="binding site" evidence="1">
    <location>
        <position position="32"/>
    </location>
    <ligand>
        <name>Mn(2+)</name>
        <dbReference type="ChEBI" id="CHEBI:29035"/>
        <label>1</label>
    </ligand>
</feature>
<feature type="binding site" evidence="1">
    <location>
        <position position="70"/>
    </location>
    <ligand>
        <name>Mn(2+)</name>
        <dbReference type="ChEBI" id="CHEBI:29035"/>
        <label>1</label>
    </ligand>
</feature>
<feature type="binding site" evidence="1">
    <location>
        <position position="70"/>
    </location>
    <ligand>
        <name>Mn(2+)</name>
        <dbReference type="ChEBI" id="CHEBI:29035"/>
        <label>2</label>
    </ligand>
</feature>
<feature type="binding site" evidence="1">
    <location>
        <position position="139"/>
    </location>
    <ligand>
        <name>Mn(2+)</name>
        <dbReference type="ChEBI" id="CHEBI:29035"/>
        <label>2</label>
    </ligand>
</feature>
<feature type="binding site" evidence="1">
    <location>
        <position position="238"/>
    </location>
    <ligand>
        <name>Mn(2+)</name>
        <dbReference type="ChEBI" id="CHEBI:29035"/>
        <label>2</label>
    </ligand>
</feature>
<feature type="binding site" evidence="1">
    <location>
        <position position="266"/>
    </location>
    <ligand>
        <name>Mn(2+)</name>
        <dbReference type="ChEBI" id="CHEBI:29035"/>
        <label>2</label>
    </ligand>
</feature>
<feature type="binding site" evidence="1">
    <location>
        <position position="268"/>
    </location>
    <ligand>
        <name>Mn(2+)</name>
        <dbReference type="ChEBI" id="CHEBI:29035"/>
        <label>1</label>
    </ligand>
</feature>